<gene>
    <name type="primary">FABP1</name>
</gene>
<feature type="chain" id="PRO_0000067333" description="Fatty acid-binding protein, liver">
    <location>
        <begin position="1"/>
        <end position="127"/>
    </location>
</feature>
<feature type="modified residue" description="N-acetylmethionine" evidence="6">
    <location>
        <position position="1"/>
    </location>
</feature>
<feature type="modified residue" description="N6-succinyllysine" evidence="4">
    <location>
        <position position="31"/>
    </location>
</feature>
<feature type="modified residue" description="N6-succinyllysine" evidence="4">
    <location>
        <position position="36"/>
    </location>
</feature>
<feature type="modified residue" description="Phosphoserine" evidence="2">
    <location>
        <position position="39"/>
    </location>
</feature>
<feature type="modified residue" description="N6-succinyllysine" evidence="4">
    <location>
        <position position="46"/>
    </location>
</feature>
<feature type="modified residue" description="Phosphoserine" evidence="3">
    <location>
        <position position="56"/>
    </location>
</feature>
<feature type="modified residue" description="N6-succinyllysine" evidence="4">
    <location>
        <position position="57"/>
    </location>
</feature>
<feature type="modified residue" description="N6-succinyllysine" evidence="4">
    <location>
        <position position="78"/>
    </location>
</feature>
<feature type="modified residue" description="N6-succinyllysine" evidence="4">
    <location>
        <position position="90"/>
    </location>
</feature>
<feature type="modified residue" description="Phosphoserine" evidence="4">
    <location>
        <position position="100"/>
    </location>
</feature>
<feature type="modified residue" description="Deamidated asparagine; alternate" evidence="6">
    <location>
        <position position="105"/>
    </location>
</feature>
<feature type="modified residue" description="N6-succinyllysine" evidence="4">
    <location>
        <position position="121"/>
    </location>
</feature>
<feature type="cross-link" description="Isoaspartyl glycine isopeptide (Asn-Gly); alternate" evidence="7">
    <location>
        <begin position="105"/>
        <end position="106"/>
    </location>
</feature>
<comment type="function">
    <text evidence="3 5">Plays a role in lipoprotein-mediated cholesterol uptake in hepatocytes. Binds cholesterol. Binds free fatty acids and their coenzyme A derivatives, bilirubin, and some other small molecules in the cytoplasm. May be involved in intracellular lipid transport.</text>
</comment>
<comment type="subunit">
    <text>Monomer.</text>
</comment>
<comment type="subcellular location">
    <subcellularLocation>
        <location>Cytoplasm</location>
    </subcellularLocation>
</comment>
<comment type="domain">
    <text evidence="1">Forms a beta-barrel structure that accommodates hydrophobic ligands in its interior.</text>
</comment>
<comment type="PTM">
    <text evidence="6">Deamidation and transpeptidation at the beta carboxyl of Asn-105 forms an isoaspartyl residue and Edman degradation appears as though blocked. This rearrangement gives rise to an extra negative charge carried by the acid form.</text>
</comment>
<comment type="similarity">
    <text evidence="7">Belongs to the calycin superfamily. Fatty-acid binding protein (FABP) family.</text>
</comment>
<accession>P80425</accession>
<accession>Q2M2U0</accession>
<protein>
    <recommendedName>
        <fullName>Fatty acid-binding protein, liver</fullName>
    </recommendedName>
    <alternativeName>
        <fullName>Fatty acid-binding protein 1</fullName>
    </alternativeName>
    <alternativeName>
        <fullName>Liver-type fatty acid-binding protein</fullName>
        <shortName>L-FABP</shortName>
    </alternativeName>
</protein>
<evidence type="ECO:0000250" key="1"/>
<evidence type="ECO:0000250" key="2">
    <source>
        <dbReference type="UniProtKB" id="P02692"/>
    </source>
</evidence>
<evidence type="ECO:0000250" key="3">
    <source>
        <dbReference type="UniProtKB" id="P07148"/>
    </source>
</evidence>
<evidence type="ECO:0000250" key="4">
    <source>
        <dbReference type="UniProtKB" id="P12710"/>
    </source>
</evidence>
<evidence type="ECO:0000250" key="5">
    <source>
        <dbReference type="UniProtKB" id="P82289"/>
    </source>
</evidence>
<evidence type="ECO:0000269" key="6">
    <source>
    </source>
</evidence>
<evidence type="ECO:0000305" key="7"/>
<proteinExistence type="evidence at protein level"/>
<name>FABPL_BOVIN</name>
<reference key="1">
    <citation type="journal article" date="1993" name="J. Biol. Chem.">
        <title>Amino acid exchange and covalent modification by cysteine and glutathione explain isoforms of fatty acid-binding protein occurring in bovine liver.</title>
        <authorList>
            <person name="Doermann P."/>
            <person name="Boerchers T."/>
            <person name="Korf U."/>
            <person name="Hoejrup P."/>
            <person name="Roepstorff P."/>
            <person name="Spener F."/>
        </authorList>
    </citation>
    <scope>PROTEIN SEQUENCE</scope>
    <scope>ACETYLATION AT MET-1</scope>
    <scope>DEAMIDATION AT ASN-105</scope>
    <source>
        <tissue>Liver</tissue>
    </source>
</reference>
<reference key="2">
    <citation type="journal article" date="1995" name="Biochim. Biophys. Acta">
        <title>Analysis of the ligand binding properties of recombinant bovine liver-type fatty acid binding protein.</title>
        <authorList>
            <person name="Rolf B."/>
            <person name="Oudenampsen-Krueger E."/>
            <person name="Boerchers T."/>
            <person name="Faergeman N.J."/>
            <person name="Knudsen J."/>
            <person name="Lezius A."/>
            <person name="Spener F."/>
        </authorList>
    </citation>
    <scope>NUCLEOTIDE SEQUENCE [MRNA]</scope>
    <source>
        <tissue>Liver</tissue>
    </source>
</reference>
<reference key="3">
    <citation type="submission" date="2006-01" db="EMBL/GenBank/DDBJ databases">
        <authorList>
            <consortium name="NIH - Mammalian Gene Collection (MGC) project"/>
        </authorList>
    </citation>
    <scope>NUCLEOTIDE SEQUENCE [LARGE SCALE MRNA]</scope>
    <source>
        <strain>Hereford</strain>
        <tissue>Testis</tissue>
    </source>
</reference>
<organism>
    <name type="scientific">Bos taurus</name>
    <name type="common">Bovine</name>
    <dbReference type="NCBI Taxonomy" id="9913"/>
    <lineage>
        <taxon>Eukaryota</taxon>
        <taxon>Metazoa</taxon>
        <taxon>Chordata</taxon>
        <taxon>Craniata</taxon>
        <taxon>Vertebrata</taxon>
        <taxon>Euteleostomi</taxon>
        <taxon>Mammalia</taxon>
        <taxon>Eutheria</taxon>
        <taxon>Laurasiatheria</taxon>
        <taxon>Artiodactyla</taxon>
        <taxon>Ruminantia</taxon>
        <taxon>Pecora</taxon>
        <taxon>Bovidae</taxon>
        <taxon>Bovinae</taxon>
        <taxon>Bos</taxon>
    </lineage>
</organism>
<sequence length="127" mass="14227">MNFSGKYQVQTQENYEAFMKAVGMPDDIIQKGKDIKGVSEIVQNGKHFKFIITAGSKVIQNEFTLGEECEMEFMTGEKIKAVVQQEGDNKLVTTFKGIKSVTEFNGDTVTSTMTKGDVVFKRVSKRI</sequence>
<keyword id="KW-0007">Acetylation</keyword>
<keyword id="KW-0963">Cytoplasm</keyword>
<keyword id="KW-0903">Direct protein sequencing</keyword>
<keyword id="KW-1017">Isopeptide bond</keyword>
<keyword id="KW-0446">Lipid-binding</keyword>
<keyword id="KW-0597">Phosphoprotein</keyword>
<keyword id="KW-1185">Reference proteome</keyword>
<keyword id="KW-0813">Transport</keyword>
<dbReference type="EMBL" id="X86904">
    <property type="protein sequence ID" value="CAA60506.1"/>
    <property type="molecule type" value="mRNA"/>
</dbReference>
<dbReference type="EMBL" id="BC111622">
    <property type="protein sequence ID" value="AAI11623.1"/>
    <property type="molecule type" value="mRNA"/>
</dbReference>
<dbReference type="PIR" id="S54268">
    <property type="entry name" value="S54268"/>
</dbReference>
<dbReference type="RefSeq" id="NP_787011.1">
    <property type="nucleotide sequence ID" value="NM_175817.3"/>
</dbReference>
<dbReference type="SMR" id="P80425"/>
<dbReference type="FunCoup" id="P80425">
    <property type="interactions" value="316"/>
</dbReference>
<dbReference type="STRING" id="9913.ENSBTAP00000024032"/>
<dbReference type="iPTMnet" id="P80425"/>
<dbReference type="PaxDb" id="9913-ENSBTAP00000054269"/>
<dbReference type="PeptideAtlas" id="P80425"/>
<dbReference type="Ensembl" id="ENSBTAT00000024032.4">
    <property type="protein sequence ID" value="ENSBTAP00000024032.2"/>
    <property type="gene ID" value="ENSBTAG00000018054.5"/>
</dbReference>
<dbReference type="GeneID" id="327700"/>
<dbReference type="KEGG" id="bta:327700"/>
<dbReference type="CTD" id="2168"/>
<dbReference type="VEuPathDB" id="HostDB:ENSBTAG00000018054"/>
<dbReference type="VGNC" id="VGNC:28695">
    <property type="gene designation" value="FABP1"/>
</dbReference>
<dbReference type="eggNOG" id="KOG4015">
    <property type="taxonomic scope" value="Eukaryota"/>
</dbReference>
<dbReference type="GeneTree" id="ENSGT00940000155135"/>
<dbReference type="HOGENOM" id="CLU_113772_4_2_1"/>
<dbReference type="InParanoid" id="P80425"/>
<dbReference type="OMA" id="GKYQVQT"/>
<dbReference type="OrthoDB" id="9971011at2759"/>
<dbReference type="Reactome" id="R-BTA-163560">
    <property type="pathway name" value="Triglyceride catabolism"/>
</dbReference>
<dbReference type="Reactome" id="R-BTA-189483">
    <property type="pathway name" value="Heme degradation"/>
</dbReference>
<dbReference type="Reactome" id="R-BTA-400206">
    <property type="pathway name" value="Regulation of lipid metabolism by PPARalpha"/>
</dbReference>
<dbReference type="Reactome" id="R-BTA-9707564">
    <property type="pathway name" value="Cytoprotection by HMOX1"/>
</dbReference>
<dbReference type="Proteomes" id="UP000009136">
    <property type="component" value="Chromosome 11"/>
</dbReference>
<dbReference type="Bgee" id="ENSBTAG00000018054">
    <property type="expression patterns" value="Expressed in caecum and 57 other cell types or tissues"/>
</dbReference>
<dbReference type="GO" id="GO:0005829">
    <property type="term" value="C:cytosol"/>
    <property type="evidence" value="ECO:0000318"/>
    <property type="project" value="GO_Central"/>
</dbReference>
<dbReference type="GO" id="GO:0005654">
    <property type="term" value="C:nucleoplasm"/>
    <property type="evidence" value="ECO:0007669"/>
    <property type="project" value="Ensembl"/>
</dbReference>
<dbReference type="GO" id="GO:0005634">
    <property type="term" value="C:nucleus"/>
    <property type="evidence" value="ECO:0000318"/>
    <property type="project" value="GO_Central"/>
</dbReference>
<dbReference type="GO" id="GO:0016209">
    <property type="term" value="F:antioxidant activity"/>
    <property type="evidence" value="ECO:0007669"/>
    <property type="project" value="Ensembl"/>
</dbReference>
<dbReference type="GO" id="GO:0003682">
    <property type="term" value="F:chromatin binding"/>
    <property type="evidence" value="ECO:0007669"/>
    <property type="project" value="Ensembl"/>
</dbReference>
<dbReference type="GO" id="GO:0005504">
    <property type="term" value="F:fatty acid binding"/>
    <property type="evidence" value="ECO:0000318"/>
    <property type="project" value="GO_Central"/>
</dbReference>
<dbReference type="GO" id="GO:0070301">
    <property type="term" value="P:cellular response to hydrogen peroxide"/>
    <property type="evidence" value="ECO:0007669"/>
    <property type="project" value="Ensembl"/>
</dbReference>
<dbReference type="GO" id="GO:0071456">
    <property type="term" value="P:cellular response to hypoxia"/>
    <property type="evidence" value="ECO:0007669"/>
    <property type="project" value="Ensembl"/>
</dbReference>
<dbReference type="GO" id="GO:0015908">
    <property type="term" value="P:fatty acid transport"/>
    <property type="evidence" value="ECO:0000318"/>
    <property type="project" value="GO_Central"/>
</dbReference>
<dbReference type="CDD" id="cd19444">
    <property type="entry name" value="FABP1"/>
    <property type="match status" value="1"/>
</dbReference>
<dbReference type="FunFam" id="2.40.128.20:FF:000006">
    <property type="entry name" value="Fatty acid-binding protein, liver"/>
    <property type="match status" value="1"/>
</dbReference>
<dbReference type="Gene3D" id="2.40.128.20">
    <property type="match status" value="1"/>
</dbReference>
<dbReference type="InterPro" id="IPR012674">
    <property type="entry name" value="Calycin"/>
</dbReference>
<dbReference type="InterPro" id="IPR000463">
    <property type="entry name" value="Fatty_acid-bd"/>
</dbReference>
<dbReference type="InterPro" id="IPR031259">
    <property type="entry name" value="ILBP"/>
</dbReference>
<dbReference type="PANTHER" id="PTHR11955">
    <property type="entry name" value="FATTY ACID BINDING PROTEIN"/>
    <property type="match status" value="1"/>
</dbReference>
<dbReference type="Pfam" id="PF14651">
    <property type="entry name" value="Lipocalin_7"/>
    <property type="match status" value="1"/>
</dbReference>
<dbReference type="PRINTS" id="PR00178">
    <property type="entry name" value="FATTYACIDBP"/>
</dbReference>
<dbReference type="SUPFAM" id="SSF50814">
    <property type="entry name" value="Lipocalins"/>
    <property type="match status" value="1"/>
</dbReference>
<dbReference type="PROSITE" id="PS00214">
    <property type="entry name" value="FABP"/>
    <property type="match status" value="1"/>
</dbReference>